<gene>
    <name evidence="3" type="primary">dtcB</name>
    <name evidence="6" type="synonym">P698DRAFT_02037</name>
</gene>
<reference key="1">
    <citation type="journal article" date="2014" name="Genome Announc.">
        <title>Draft Genome Sequence of Enterobacter cloacae Strain JD6301.</title>
        <authorList>
            <person name="Wilson J.G."/>
            <person name="French W.T."/>
            <person name="Lipzen A."/>
            <person name="Martin J."/>
            <person name="Schackwitz W."/>
            <person name="Woyke T."/>
            <person name="Shapiro N."/>
            <person name="Bullard J.W."/>
            <person name="Champlin F.R."/>
            <person name="Donaldson J.R."/>
        </authorList>
    </citation>
    <scope>NUCLEOTIDE SEQUENCE [LARGE SCALE GENOMIC DNA]</scope>
    <source>
        <strain>JD6301</strain>
    </source>
</reference>
<reference key="2">
    <citation type="journal article" date="2023" name="Cell">
        <title>A conserved family of immune effectors cleaves cellular ATP upon viral infection.</title>
        <authorList>
            <person name="Rousset F."/>
            <person name="Yirmiya E."/>
            <person name="Nesher S."/>
            <person name="Brandis A."/>
            <person name="Mehlman T."/>
            <person name="Itkin M."/>
            <person name="Malitsky S."/>
            <person name="Millman A."/>
            <person name="Melamed S."/>
            <person name="Sorek R."/>
        </authorList>
    </citation>
    <scope>FUNCTION IN VIRAL DEFENSE</scope>
    <source>
        <strain>JD6301</strain>
    </source>
</reference>
<protein>
    <recommendedName>
        <fullName evidence="4">Detocs response regulatory protein DtcB</fullName>
    </recommendedName>
</protein>
<name>DTCB_ENTC6</name>
<evidence type="ECO:0000255" key="1">
    <source>
        <dbReference type="PROSITE-ProRule" id="PRU00169"/>
    </source>
</evidence>
<evidence type="ECO:0000269" key="2">
    <source>
    </source>
</evidence>
<evidence type="ECO:0000303" key="3">
    <source>
    </source>
</evidence>
<evidence type="ECO:0000305" key="4"/>
<evidence type="ECO:0000305" key="5">
    <source>
    </source>
</evidence>
<evidence type="ECO:0000312" key="6">
    <source>
        <dbReference type="EMBL" id="JDWH01000005"/>
    </source>
</evidence>
<feature type="chain" id="PRO_0000459336" description="Detocs response regulatory protein DtcB">
    <location>
        <begin position="1"/>
        <end position="150"/>
    </location>
</feature>
<feature type="domain" description="Response regulatory" evidence="1">
    <location>
        <begin position="2"/>
        <end position="150"/>
    </location>
</feature>
<feature type="modified residue" description="4-aspartylphosphate" evidence="1">
    <location>
        <position position="54"/>
    </location>
</feature>
<dbReference type="EMBL" id="JDWH01000005">
    <property type="status" value="NOT_ANNOTATED_CDS"/>
    <property type="molecule type" value="Genomic_DNA"/>
</dbReference>
<dbReference type="RefSeq" id="WP_032666781.1">
    <property type="nucleotide sequence ID" value="NZ_JDWH01000005.1"/>
</dbReference>
<dbReference type="SMR" id="P0DX72"/>
<dbReference type="GO" id="GO:0051607">
    <property type="term" value="P:defense response to virus"/>
    <property type="evidence" value="ECO:0007669"/>
    <property type="project" value="UniProtKB-KW"/>
</dbReference>
<dbReference type="GO" id="GO:0000160">
    <property type="term" value="P:phosphorelay signal transduction system"/>
    <property type="evidence" value="ECO:0007669"/>
    <property type="project" value="UniProtKB-KW"/>
</dbReference>
<dbReference type="Gene3D" id="3.40.50.2300">
    <property type="match status" value="1"/>
</dbReference>
<dbReference type="InterPro" id="IPR011006">
    <property type="entry name" value="CheY-like_superfamily"/>
</dbReference>
<dbReference type="SUPFAM" id="SSF52172">
    <property type="entry name" value="CheY-like"/>
    <property type="match status" value="1"/>
</dbReference>
<keyword id="KW-0051">Antiviral defense</keyword>
<keyword id="KW-0597">Phosphoprotein</keyword>
<keyword id="KW-0902">Two-component regulatory system</keyword>
<comment type="function">
    <text evidence="2 5">Possible phosphate scavenger member of the two-component regulatory system Detocs that confers resistance to bacteriophage. When the system (DtcA-DtcB-DtcC) is expressed in a susceptible E.coli (strain MG1655) it confers resistance to bacteriophages T2, T4, T5, T7, SECphi4, SECphi6 and SECphi27; the level of resistance varies, resistance to T2, T7 and SECphi4 is not very high (PubMed:37595565). DtcA probably autophosphorylates upon sensing viral infection, and subsequently transfers the phosphate signal to DtcC which activates it, leading to an antiviral defense; DtcB (this subunit) may scavenge phosphorylation signals from accidental activation of DtcA (Probable) (PubMed:37595565).</text>
</comment>
<comment type="domain">
    <text evidence="2">Consists solely of a response regulatory domain.</text>
</comment>
<comment type="PTM">
    <text evidence="5">Probably phosphorylated by DtcA.</text>
</comment>
<proteinExistence type="evidence at protein level"/>
<organism>
    <name type="scientific">Enterobacter cloacae (strain JD6301)</name>
    <dbReference type="NCBI Taxonomy" id="1399774"/>
    <lineage>
        <taxon>Bacteria</taxon>
        <taxon>Pseudomonadati</taxon>
        <taxon>Pseudomonadota</taxon>
        <taxon>Gammaproteobacteria</taxon>
        <taxon>Enterobacterales</taxon>
        <taxon>Enterobacteriaceae</taxon>
        <taxon>Enterobacter</taxon>
        <taxon>Enterobacter cloacae complex</taxon>
    </lineage>
</organism>
<accession>P0DX72</accession>
<sequence length="150" mass="17031">MKILIADDNIQKQRVLRTCIEENFGSSDITQTFSFTTTIKALTSSVKFDIILLDMTMPNYDSKEPMNNDGKMRTLAGQDVITKMAYRGITTPTIIVTQFEVFGRHSSLKPISEIAQELIASYPNIVKGYVLFDLQSELWKTDLIKKITEL</sequence>